<organism>
    <name type="scientific">Electrophorus electricus</name>
    <name type="common">Electric eel</name>
    <name type="synonym">Gymnotus electricus</name>
    <dbReference type="NCBI Taxonomy" id="8005"/>
    <lineage>
        <taxon>Eukaryota</taxon>
        <taxon>Metazoa</taxon>
        <taxon>Chordata</taxon>
        <taxon>Craniata</taxon>
        <taxon>Vertebrata</taxon>
        <taxon>Euteleostomi</taxon>
        <taxon>Actinopterygii</taxon>
        <taxon>Neopterygii</taxon>
        <taxon>Teleostei</taxon>
        <taxon>Ostariophysi</taxon>
        <taxon>Gymnotiformes</taxon>
        <taxon>Gymnotoidei</taxon>
        <taxon>Gymnotidae</taxon>
        <taxon>Electrophorus</taxon>
    </lineage>
</organism>
<keyword id="KW-0903">Direct protein sequencing</keyword>
<keyword id="KW-0496">Mitochondrion</keyword>
<keyword id="KW-0521">NADP</keyword>
<keyword id="KW-0560">Oxidoreductase</keyword>
<keyword id="KW-1185">Reference proteome</keyword>
<proteinExistence type="evidence at protein level"/>
<sequence>SEAVAEKEDDPNFFKMVEGFFDKGAAIVENKLVEDLKTRGSPEVEGNLTFT</sequence>
<feature type="chain" id="PRO_0000182744" description="Glutamate dehydrogenase">
    <location>
        <begin position="1"/>
        <end position="51" status="greater than"/>
    </location>
</feature>
<feature type="binding site" evidence="1">
    <location>
        <position position="31"/>
    </location>
    <ligand>
        <name>substrate</name>
    </ligand>
</feature>
<feature type="non-consecutive residues" evidence="3">
    <location>
        <begin position="43"/>
        <end position="44"/>
    </location>
</feature>
<feature type="non-terminal residue">
    <location>
        <position position="51"/>
    </location>
</feature>
<dbReference type="EC" id="1.4.1.3"/>
<dbReference type="SMR" id="P28270"/>
<dbReference type="STRING" id="8005.ENSEEEP00000036184"/>
<dbReference type="Proteomes" id="UP000314983">
    <property type="component" value="Unassembled WGS sequence"/>
</dbReference>
<dbReference type="GO" id="GO:0005759">
    <property type="term" value="C:mitochondrial matrix"/>
    <property type="evidence" value="ECO:0007669"/>
    <property type="project" value="UniProtKB-SubCell"/>
</dbReference>
<dbReference type="GO" id="GO:0004352">
    <property type="term" value="F:glutamate dehydrogenase (NAD+) activity"/>
    <property type="evidence" value="ECO:0007669"/>
    <property type="project" value="RHEA"/>
</dbReference>
<dbReference type="GO" id="GO:0004354">
    <property type="term" value="F:glutamate dehydrogenase (NADP+) activity"/>
    <property type="evidence" value="ECO:0007669"/>
    <property type="project" value="RHEA"/>
</dbReference>
<dbReference type="GO" id="GO:0004353">
    <property type="term" value="F:glutamate dehydrogenase [NAD(P)+] activity"/>
    <property type="evidence" value="ECO:0000250"/>
    <property type="project" value="UniProtKB"/>
</dbReference>
<dbReference type="GO" id="GO:0006541">
    <property type="term" value="P:glutamine metabolic process"/>
    <property type="evidence" value="ECO:0000250"/>
    <property type="project" value="UniProtKB"/>
</dbReference>
<dbReference type="GO" id="GO:0072350">
    <property type="term" value="P:tricarboxylic acid metabolic process"/>
    <property type="evidence" value="ECO:0000250"/>
    <property type="project" value="UniProtKB"/>
</dbReference>
<dbReference type="Gene3D" id="1.10.287.140">
    <property type="match status" value="1"/>
</dbReference>
<comment type="function">
    <text evidence="1">Mitochondrial glutamate dehydrogenase that converts L-glutamate into alpha-ketoglutarate. Plays a key role in glutamine anaplerosis by producing alpha-ketoglutarate, an important intermediate in the tricarboxylic acid cycle (By similarity).</text>
</comment>
<comment type="catalytic activity">
    <reaction evidence="2">
        <text>L-glutamate + NAD(+) + H2O = 2-oxoglutarate + NH4(+) + NADH + H(+)</text>
        <dbReference type="Rhea" id="RHEA:15133"/>
        <dbReference type="ChEBI" id="CHEBI:15377"/>
        <dbReference type="ChEBI" id="CHEBI:15378"/>
        <dbReference type="ChEBI" id="CHEBI:16810"/>
        <dbReference type="ChEBI" id="CHEBI:28938"/>
        <dbReference type="ChEBI" id="CHEBI:29985"/>
        <dbReference type="ChEBI" id="CHEBI:57540"/>
        <dbReference type="ChEBI" id="CHEBI:57945"/>
        <dbReference type="EC" id="1.4.1.3"/>
    </reaction>
</comment>
<comment type="catalytic activity">
    <reaction evidence="2">
        <text>L-glutamate + NADP(+) + H2O = 2-oxoglutarate + NH4(+) + NADPH + H(+)</text>
        <dbReference type="Rhea" id="RHEA:11612"/>
        <dbReference type="ChEBI" id="CHEBI:15377"/>
        <dbReference type="ChEBI" id="CHEBI:15378"/>
        <dbReference type="ChEBI" id="CHEBI:16810"/>
        <dbReference type="ChEBI" id="CHEBI:28938"/>
        <dbReference type="ChEBI" id="CHEBI:29985"/>
        <dbReference type="ChEBI" id="CHEBI:57783"/>
        <dbReference type="ChEBI" id="CHEBI:58349"/>
        <dbReference type="EC" id="1.4.1.3"/>
    </reaction>
</comment>
<comment type="subunit">
    <text>Homohexamer.</text>
</comment>
<comment type="subcellular location">
    <subcellularLocation>
        <location evidence="1">Mitochondrion matrix</location>
    </subcellularLocation>
</comment>
<comment type="similarity">
    <text evidence="3">Belongs to the Glu/Leu/Phe/Val dehydrogenases family.</text>
</comment>
<name>DHE3_ELEEL</name>
<protein>
    <recommendedName>
        <fullName>Glutamate dehydrogenase</fullName>
        <shortName>GDH</shortName>
        <ecNumber>1.4.1.3</ecNumber>
    </recommendedName>
</protein>
<evidence type="ECO:0000250" key="1"/>
<evidence type="ECO:0000255" key="2">
    <source>
        <dbReference type="PROSITE-ProRule" id="PRU10011"/>
    </source>
</evidence>
<evidence type="ECO:0000305" key="3"/>
<reference key="1">
    <citation type="journal article" date="1992" name="J. Biochem.">
        <title>The trypsin-catalyzed activation of glutamate dehydrogenase purified from eel liver.</title>
        <authorList>
            <person name="Tang M.-Q."/>
            <person name="Ando S."/>
            <person name="Yamada S."/>
            <person name="Hayashi S."/>
        </authorList>
    </citation>
    <scope>PROTEIN SEQUENCE</scope>
    <source>
        <tissue>Liver</tissue>
    </source>
</reference>
<accession>P28270</accession>